<keyword id="KW-0004">4Fe-4S</keyword>
<keyword id="KW-0028">Amino-acid biosynthesis</keyword>
<keyword id="KW-0198">Cysteine biosynthesis</keyword>
<keyword id="KW-0349">Heme</keyword>
<keyword id="KW-0408">Iron</keyword>
<keyword id="KW-0411">Iron-sulfur</keyword>
<keyword id="KW-0479">Metal-binding</keyword>
<keyword id="KW-0521">NADP</keyword>
<keyword id="KW-0560">Oxidoreductase</keyword>
<comment type="function">
    <text evidence="1">Component of the sulfite reductase complex that catalyzes the 6-electron reduction of sulfite to sulfide. This is one of several activities required for the biosynthesis of L-cysteine from sulfate.</text>
</comment>
<comment type="catalytic activity">
    <reaction evidence="1">
        <text>hydrogen sulfide + 3 NADP(+) + 3 H2O = sulfite + 3 NADPH + 4 H(+)</text>
        <dbReference type="Rhea" id="RHEA:13801"/>
        <dbReference type="ChEBI" id="CHEBI:15377"/>
        <dbReference type="ChEBI" id="CHEBI:15378"/>
        <dbReference type="ChEBI" id="CHEBI:17359"/>
        <dbReference type="ChEBI" id="CHEBI:29919"/>
        <dbReference type="ChEBI" id="CHEBI:57783"/>
        <dbReference type="ChEBI" id="CHEBI:58349"/>
        <dbReference type="EC" id="1.8.1.2"/>
    </reaction>
</comment>
<comment type="cofactor">
    <cofactor evidence="1">
        <name>siroheme</name>
        <dbReference type="ChEBI" id="CHEBI:60052"/>
    </cofactor>
    <text evidence="1">Binds 1 siroheme per subunit.</text>
</comment>
<comment type="cofactor">
    <cofactor evidence="1">
        <name>[4Fe-4S] cluster</name>
        <dbReference type="ChEBI" id="CHEBI:49883"/>
    </cofactor>
    <text evidence="1">Binds 1 [4Fe-4S] cluster per subunit.</text>
</comment>
<comment type="pathway">
    <text evidence="1">Sulfur metabolism; hydrogen sulfide biosynthesis; hydrogen sulfide from sulfite (NADPH route): step 1/1.</text>
</comment>
<comment type="subunit">
    <text evidence="1">Alpha(8)-beta(8). The alpha component is a flavoprotein, the beta component is a hemoprotein.</text>
</comment>
<comment type="similarity">
    <text evidence="1">Belongs to the nitrite and sulfite reductase 4Fe-4S domain family.</text>
</comment>
<evidence type="ECO:0000255" key="1">
    <source>
        <dbReference type="HAMAP-Rule" id="MF_01540"/>
    </source>
</evidence>
<name>CYSI_ANOFW</name>
<proteinExistence type="inferred from homology"/>
<dbReference type="EC" id="1.8.1.2" evidence="1"/>
<dbReference type="EMBL" id="CP000922">
    <property type="protein sequence ID" value="ACJ33961.1"/>
    <property type="molecule type" value="Genomic_DNA"/>
</dbReference>
<dbReference type="SMR" id="B7GJU8"/>
<dbReference type="STRING" id="491915.Aflv_1596"/>
<dbReference type="KEGG" id="afl:Aflv_1596"/>
<dbReference type="PATRIC" id="fig|491915.6.peg.1645"/>
<dbReference type="eggNOG" id="COG0155">
    <property type="taxonomic scope" value="Bacteria"/>
</dbReference>
<dbReference type="HOGENOM" id="CLU_001975_3_2_9"/>
<dbReference type="UniPathway" id="UPA00140">
    <property type="reaction ID" value="UER00207"/>
</dbReference>
<dbReference type="Proteomes" id="UP000000742">
    <property type="component" value="Chromosome"/>
</dbReference>
<dbReference type="GO" id="GO:0009337">
    <property type="term" value="C:sulfite reductase complex (NADPH)"/>
    <property type="evidence" value="ECO:0007669"/>
    <property type="project" value="InterPro"/>
</dbReference>
<dbReference type="GO" id="GO:0051539">
    <property type="term" value="F:4 iron, 4 sulfur cluster binding"/>
    <property type="evidence" value="ECO:0007669"/>
    <property type="project" value="UniProtKB-KW"/>
</dbReference>
<dbReference type="GO" id="GO:0020037">
    <property type="term" value="F:heme binding"/>
    <property type="evidence" value="ECO:0007669"/>
    <property type="project" value="InterPro"/>
</dbReference>
<dbReference type="GO" id="GO:0046872">
    <property type="term" value="F:metal ion binding"/>
    <property type="evidence" value="ECO:0007669"/>
    <property type="project" value="UniProtKB-KW"/>
</dbReference>
<dbReference type="GO" id="GO:0050661">
    <property type="term" value="F:NADP binding"/>
    <property type="evidence" value="ECO:0007669"/>
    <property type="project" value="InterPro"/>
</dbReference>
<dbReference type="GO" id="GO:0050311">
    <property type="term" value="F:sulfite reductase (ferredoxin) activity"/>
    <property type="evidence" value="ECO:0007669"/>
    <property type="project" value="TreeGrafter"/>
</dbReference>
<dbReference type="GO" id="GO:0004783">
    <property type="term" value="F:sulfite reductase (NADPH) activity"/>
    <property type="evidence" value="ECO:0007669"/>
    <property type="project" value="UniProtKB-UniRule"/>
</dbReference>
<dbReference type="GO" id="GO:0019344">
    <property type="term" value="P:cysteine biosynthetic process"/>
    <property type="evidence" value="ECO:0007669"/>
    <property type="project" value="UniProtKB-KW"/>
</dbReference>
<dbReference type="GO" id="GO:0070814">
    <property type="term" value="P:hydrogen sulfide biosynthetic process"/>
    <property type="evidence" value="ECO:0007669"/>
    <property type="project" value="UniProtKB-UniRule"/>
</dbReference>
<dbReference type="GO" id="GO:0000103">
    <property type="term" value="P:sulfate assimilation"/>
    <property type="evidence" value="ECO:0007669"/>
    <property type="project" value="UniProtKB-UniRule"/>
</dbReference>
<dbReference type="FunFam" id="3.30.413.10:FF:000003">
    <property type="entry name" value="Sulfite reductase [NADPH] hemoprotein beta-component"/>
    <property type="match status" value="1"/>
</dbReference>
<dbReference type="FunFam" id="3.30.413.10:FF:000004">
    <property type="entry name" value="Sulfite reductase [NADPH] hemoprotein beta-component"/>
    <property type="match status" value="1"/>
</dbReference>
<dbReference type="Gene3D" id="3.30.413.10">
    <property type="entry name" value="Sulfite Reductase Hemoprotein, domain 1"/>
    <property type="match status" value="2"/>
</dbReference>
<dbReference type="HAMAP" id="MF_01540">
    <property type="entry name" value="CysI"/>
    <property type="match status" value="1"/>
</dbReference>
<dbReference type="InterPro" id="IPR011786">
    <property type="entry name" value="CysI"/>
</dbReference>
<dbReference type="InterPro" id="IPR005117">
    <property type="entry name" value="NiRdtase/SiRdtase_haem-b_fer"/>
</dbReference>
<dbReference type="InterPro" id="IPR036136">
    <property type="entry name" value="Nit/Sulf_reduc_fer-like_dom_sf"/>
</dbReference>
<dbReference type="InterPro" id="IPR006067">
    <property type="entry name" value="NO2/SO3_Rdtase_4Fe4S_dom"/>
</dbReference>
<dbReference type="InterPro" id="IPR045169">
    <property type="entry name" value="NO2/SO3_Rdtase_4Fe4S_prot"/>
</dbReference>
<dbReference type="InterPro" id="IPR045854">
    <property type="entry name" value="NO2/SO3_Rdtase_4Fe4S_sf"/>
</dbReference>
<dbReference type="InterPro" id="IPR006066">
    <property type="entry name" value="NO2/SO3_Rdtase_FeS/sirohaem_BS"/>
</dbReference>
<dbReference type="NCBIfam" id="TIGR02041">
    <property type="entry name" value="CysI"/>
    <property type="match status" value="1"/>
</dbReference>
<dbReference type="NCBIfam" id="NF010029">
    <property type="entry name" value="PRK13504.1"/>
    <property type="match status" value="1"/>
</dbReference>
<dbReference type="PANTHER" id="PTHR11493:SF47">
    <property type="entry name" value="SULFITE REDUCTASE [NADPH] SUBUNIT BETA"/>
    <property type="match status" value="1"/>
</dbReference>
<dbReference type="PANTHER" id="PTHR11493">
    <property type="entry name" value="SULFITE REDUCTASE [NADPH] SUBUNIT BETA-RELATED"/>
    <property type="match status" value="1"/>
</dbReference>
<dbReference type="Pfam" id="PF01077">
    <property type="entry name" value="NIR_SIR"/>
    <property type="match status" value="1"/>
</dbReference>
<dbReference type="Pfam" id="PF03460">
    <property type="entry name" value="NIR_SIR_ferr"/>
    <property type="match status" value="2"/>
</dbReference>
<dbReference type="PRINTS" id="PR00397">
    <property type="entry name" value="SIROHAEM"/>
</dbReference>
<dbReference type="SUPFAM" id="SSF56014">
    <property type="entry name" value="Nitrite and sulphite reductase 4Fe-4S domain-like"/>
    <property type="match status" value="2"/>
</dbReference>
<dbReference type="SUPFAM" id="SSF55124">
    <property type="entry name" value="Nitrite/Sulfite reductase N-terminal domain-like"/>
    <property type="match status" value="2"/>
</dbReference>
<dbReference type="PROSITE" id="PS00365">
    <property type="entry name" value="NIR_SIR"/>
    <property type="match status" value="1"/>
</dbReference>
<feature type="chain" id="PRO_0000388472" description="Sulfite reductase [NADPH] hemoprotein beta-component">
    <location>
        <begin position="1"/>
        <end position="571"/>
    </location>
</feature>
<feature type="binding site" evidence="1">
    <location>
        <position position="436"/>
    </location>
    <ligand>
        <name>[4Fe-4S] cluster</name>
        <dbReference type="ChEBI" id="CHEBI:49883"/>
    </ligand>
</feature>
<feature type="binding site" evidence="1">
    <location>
        <position position="442"/>
    </location>
    <ligand>
        <name>[4Fe-4S] cluster</name>
        <dbReference type="ChEBI" id="CHEBI:49883"/>
    </ligand>
</feature>
<feature type="binding site" evidence="1">
    <location>
        <position position="481"/>
    </location>
    <ligand>
        <name>[4Fe-4S] cluster</name>
        <dbReference type="ChEBI" id="CHEBI:49883"/>
    </ligand>
</feature>
<feature type="binding site" evidence="1">
    <location>
        <position position="485"/>
    </location>
    <ligand>
        <name>[4Fe-4S] cluster</name>
        <dbReference type="ChEBI" id="CHEBI:49883"/>
    </ligand>
</feature>
<feature type="binding site" description="axial binding residue" evidence="1">
    <location>
        <position position="485"/>
    </location>
    <ligand>
        <name>siroheme</name>
        <dbReference type="ChEBI" id="CHEBI:60052"/>
    </ligand>
    <ligandPart>
        <name>Fe</name>
        <dbReference type="ChEBI" id="CHEBI:18248"/>
    </ligandPart>
</feature>
<reference key="1">
    <citation type="journal article" date="2008" name="Genome Biol.">
        <title>Encapsulated in silica: genome, proteome and physiology of the thermophilic bacterium Anoxybacillus flavithermus WK1.</title>
        <authorList>
            <person name="Saw J.H."/>
            <person name="Mountain B.W."/>
            <person name="Feng L."/>
            <person name="Omelchenko M.V."/>
            <person name="Hou S."/>
            <person name="Saito J.A."/>
            <person name="Stott M.B."/>
            <person name="Li D."/>
            <person name="Zhao G."/>
            <person name="Wu J."/>
            <person name="Galperin M.Y."/>
            <person name="Koonin E.V."/>
            <person name="Makarova K.S."/>
            <person name="Wolf Y.I."/>
            <person name="Rigden D.J."/>
            <person name="Dunfield P.F."/>
            <person name="Wang L."/>
            <person name="Alam M."/>
        </authorList>
    </citation>
    <scope>NUCLEOTIDE SEQUENCE [LARGE SCALE GENOMIC DNA]</scope>
    <source>
        <strain>DSM 21510 / WK1</strain>
    </source>
</reference>
<gene>
    <name evidence="1" type="primary">cysI</name>
    <name type="ordered locus">Aflv_1596</name>
</gene>
<protein>
    <recommendedName>
        <fullName evidence="1">Sulfite reductase [NADPH] hemoprotein beta-component</fullName>
        <shortName evidence="1">SiR-HP</shortName>
        <shortName evidence="1">SiRHP</shortName>
        <ecNumber evidence="1">1.8.1.2</ecNumber>
    </recommendedName>
</protein>
<accession>B7GJU8</accession>
<sequence length="571" mass="64901">MEKFLLTAPDGPPSDVERIKQESNYLRGTLKETMEDRITAGIPEDDNRLMKFHGSYLQDDRDLRAERQKQKLEPAYQFMIRVRTPGGVATPEQWLAMDELARKYANGTLKLTTRQAFQFHGVLKWNMKKTLQAINDALLTTLAACGDVNRNVMCNPNPYQSEVHAEVYEWAKRLSDHLLPQTRAYYEIWLDEEKVADTPDVEQEPIYGALYLPRKFKIGIAVPPSNDVDVFSQDLGFIAIVEHGKLAGFNVAIGGGMGMTHGDRTTYPQLAKVIGFCKPEQVIDVAEKVVTIQRDYGNRSVRKHARFKYTIDRLGLDAIKAELERRLGWELEEARPYRFEHNGDRYGWVEGVNGTWHFTLFIEGGRVKDTDDYPLMTGLREIAKVHTGDFRLTANQNLVIANVPSEKKEEMDALIQQYKLTDGKHYSALRRNSLACVALPTCGLAMAEAERYLPTLIDKIEEIVEENGLRDEEITIRMTGCPNGCARHVLGEIAFIGKSVGKYNMYLGAAFDGSRLGKLYRENIGEKEILSELRMLLSRYAKERFDGERFGDFVIRAGIVKEVTDGTNFHD</sequence>
<organism>
    <name type="scientific">Anoxybacillus flavithermus (strain DSM 21510 / WK1)</name>
    <dbReference type="NCBI Taxonomy" id="491915"/>
    <lineage>
        <taxon>Bacteria</taxon>
        <taxon>Bacillati</taxon>
        <taxon>Bacillota</taxon>
        <taxon>Bacilli</taxon>
        <taxon>Bacillales</taxon>
        <taxon>Anoxybacillaceae</taxon>
        <taxon>Anoxybacillus</taxon>
    </lineage>
</organism>